<comment type="function">
    <text evidence="2">Component of the ubiquinol-cytochrome c reductase complex (complex III or cytochrome b-c1 complex) that is part of the mitochondrial respiratory chain. The b-c1 complex mediates electron transfer from ubiquinol to cytochrome c. Contributes to the generation of a proton gradient across the mitochondrial membrane that is then used for ATP synthesis.</text>
</comment>
<comment type="cofactor">
    <cofactor evidence="2">
        <name>heme b</name>
        <dbReference type="ChEBI" id="CHEBI:60344"/>
    </cofactor>
    <text evidence="2">Binds 2 heme b groups non-covalently.</text>
</comment>
<comment type="subunit">
    <text evidence="2">The cytochrome bc1 complex contains 3 respiratory subunits (MT-CYB, CYC1 and UQCRFS1), 2 core proteins (UQCRC1 and UQCRC2) and probably 6 low-molecular weight proteins.</text>
</comment>
<comment type="subcellular location">
    <subcellularLocation>
        <location evidence="2">Mitochondrion inner membrane</location>
        <topology evidence="2">Multi-pass membrane protein</topology>
    </subcellularLocation>
</comment>
<comment type="miscellaneous">
    <text evidence="1">Heme 1 (or BL or b562) is low-potential and absorbs at about 562 nm, and heme 2 (or BH or b566) is high-potential and absorbs at about 566 nm.</text>
</comment>
<comment type="similarity">
    <text evidence="3 4">Belongs to the cytochrome b family.</text>
</comment>
<comment type="caution">
    <text evidence="2">The full-length protein contains only eight transmembrane helices, not nine as predicted by bioinformatics tools.</text>
</comment>
<sequence length="372" mass="42342">MSNQHILLVSSLLPVGSNISTWWNFGSMLLTCLMLQILTGFFLAIHYTANINLAFSSVIHIMRDVPYGWIMQNLHAISASLFFICVYIHIARGLYYGLYLNKEVWLSGMTLLVFLMATAFFGYVLPWGQMSFWAATVITNLLTAMPYLGTMLTTWLWGGFSINDPTLTRFFALHFILPFVIISLSSIHIMLLHNEGSNNPLGTNSDIDKIPFHPYHSYKDMLMITTMITLLFLILSFSPNLLNDPENFSKANPIVTPQHIKPEWYFLFAYGILRSIPNKLGGTLALLLSVVILTTAPFTHTSHTRSMIFRPLSQILFWTFIATFITITWTASKPVEPPFILISQTTSIFYFSFFIMAPLLGWAENKIMMLNN</sequence>
<organism>
    <name type="scientific">Hemachatus haemachatus</name>
    <name type="common">Rinkhals</name>
    <name type="synonym">Sepedon haemachatus</name>
    <dbReference type="NCBI Taxonomy" id="8626"/>
    <lineage>
        <taxon>Eukaryota</taxon>
        <taxon>Metazoa</taxon>
        <taxon>Chordata</taxon>
        <taxon>Craniata</taxon>
        <taxon>Vertebrata</taxon>
        <taxon>Euteleostomi</taxon>
        <taxon>Lepidosauria</taxon>
        <taxon>Squamata</taxon>
        <taxon>Bifurcata</taxon>
        <taxon>Unidentata</taxon>
        <taxon>Episquamata</taxon>
        <taxon>Toxicofera</taxon>
        <taxon>Serpentes</taxon>
        <taxon>Colubroidea</taxon>
        <taxon>Elapidae</taxon>
        <taxon>Elapinae</taxon>
        <taxon>Hemachatus</taxon>
    </lineage>
</organism>
<evidence type="ECO:0000250" key="1"/>
<evidence type="ECO:0000250" key="2">
    <source>
        <dbReference type="UniProtKB" id="P00157"/>
    </source>
</evidence>
<evidence type="ECO:0000255" key="3">
    <source>
        <dbReference type="PROSITE-ProRule" id="PRU00967"/>
    </source>
</evidence>
<evidence type="ECO:0000255" key="4">
    <source>
        <dbReference type="PROSITE-ProRule" id="PRU00968"/>
    </source>
</evidence>
<proteinExistence type="inferred from homology"/>
<keyword id="KW-0249">Electron transport</keyword>
<keyword id="KW-0349">Heme</keyword>
<keyword id="KW-0408">Iron</keyword>
<keyword id="KW-0472">Membrane</keyword>
<keyword id="KW-0479">Metal-binding</keyword>
<keyword id="KW-0496">Mitochondrion</keyword>
<keyword id="KW-0999">Mitochondrion inner membrane</keyword>
<keyword id="KW-0679">Respiratory chain</keyword>
<keyword id="KW-0812">Transmembrane</keyword>
<keyword id="KW-1133">Transmembrane helix</keyword>
<keyword id="KW-0813">Transport</keyword>
<keyword id="KW-0830">Ubiquinone</keyword>
<gene>
    <name type="primary">MT-CYB</name>
    <name type="synonym">COB</name>
    <name type="synonym">CYTB</name>
    <name type="synonym">MTCYB</name>
</gene>
<feature type="chain" id="PRO_0000061027" description="Cytochrome b">
    <location>
        <begin position="1"/>
        <end position="372"/>
    </location>
</feature>
<feature type="transmembrane region" description="Helical" evidence="2">
    <location>
        <begin position="25"/>
        <end position="45"/>
    </location>
</feature>
<feature type="transmembrane region" description="Helical" evidence="2">
    <location>
        <begin position="69"/>
        <end position="90"/>
    </location>
</feature>
<feature type="transmembrane region" description="Helical" evidence="2">
    <location>
        <begin position="105"/>
        <end position="125"/>
    </location>
</feature>
<feature type="transmembrane region" description="Helical" evidence="2">
    <location>
        <begin position="170"/>
        <end position="190"/>
    </location>
</feature>
<feature type="transmembrane region" description="Helical" evidence="2">
    <location>
        <begin position="218"/>
        <end position="238"/>
    </location>
</feature>
<feature type="transmembrane region" description="Helical" evidence="2">
    <location>
        <begin position="280"/>
        <end position="300"/>
    </location>
</feature>
<feature type="transmembrane region" description="Helical" evidence="2">
    <location>
        <begin position="312"/>
        <end position="332"/>
    </location>
</feature>
<feature type="transmembrane region" description="Helical" evidence="2">
    <location>
        <begin position="339"/>
        <end position="358"/>
    </location>
</feature>
<feature type="binding site" description="axial binding residue" evidence="2">
    <location>
        <position position="75"/>
    </location>
    <ligand>
        <name>heme b</name>
        <dbReference type="ChEBI" id="CHEBI:60344"/>
        <label>b562</label>
    </ligand>
    <ligandPart>
        <name>Fe</name>
        <dbReference type="ChEBI" id="CHEBI:18248"/>
    </ligandPart>
</feature>
<feature type="binding site" description="axial binding residue" evidence="2">
    <location>
        <position position="89"/>
    </location>
    <ligand>
        <name>heme b</name>
        <dbReference type="ChEBI" id="CHEBI:60344"/>
        <label>b566</label>
    </ligand>
    <ligandPart>
        <name>Fe</name>
        <dbReference type="ChEBI" id="CHEBI:18248"/>
    </ligandPart>
</feature>
<feature type="binding site" description="axial binding residue" evidence="2">
    <location>
        <position position="174"/>
    </location>
    <ligand>
        <name>heme b</name>
        <dbReference type="ChEBI" id="CHEBI:60344"/>
        <label>b562</label>
    </ligand>
    <ligandPart>
        <name>Fe</name>
        <dbReference type="ChEBI" id="CHEBI:18248"/>
    </ligandPart>
</feature>
<feature type="binding site" description="axial binding residue" evidence="2">
    <location>
        <position position="188"/>
    </location>
    <ligand>
        <name>heme b</name>
        <dbReference type="ChEBI" id="CHEBI:60344"/>
        <label>b566</label>
    </ligand>
    <ligandPart>
        <name>Fe</name>
        <dbReference type="ChEBI" id="CHEBI:18248"/>
    </ligandPart>
</feature>
<feature type="binding site" evidence="2">
    <location>
        <position position="193"/>
    </location>
    <ligand>
        <name>a ubiquinone</name>
        <dbReference type="ChEBI" id="CHEBI:16389"/>
    </ligand>
</feature>
<reference key="1">
    <citation type="journal article" date="2000" name="Mol. Phylogenet. Evol.">
        <title>Phylogenetic relationships of elapid snakes based on cytochrome b mtDNA sequences.</title>
        <authorList>
            <person name="Slowinski J.B."/>
            <person name="Keogh J.S."/>
        </authorList>
    </citation>
    <scope>NUCLEOTIDE SEQUENCE [GENOMIC DNA]</scope>
</reference>
<accession>Q9MLK7</accession>
<name>CYB_HEMHA</name>
<geneLocation type="mitochondrion"/>
<dbReference type="EMBL" id="AF217821">
    <property type="protein sequence ID" value="AAF37240.1"/>
    <property type="molecule type" value="Genomic_DNA"/>
</dbReference>
<dbReference type="SMR" id="Q9MLK7"/>
<dbReference type="GO" id="GO:0005743">
    <property type="term" value="C:mitochondrial inner membrane"/>
    <property type="evidence" value="ECO:0007669"/>
    <property type="project" value="UniProtKB-SubCell"/>
</dbReference>
<dbReference type="GO" id="GO:0045275">
    <property type="term" value="C:respiratory chain complex III"/>
    <property type="evidence" value="ECO:0007669"/>
    <property type="project" value="InterPro"/>
</dbReference>
<dbReference type="GO" id="GO:0046872">
    <property type="term" value="F:metal ion binding"/>
    <property type="evidence" value="ECO:0007669"/>
    <property type="project" value="UniProtKB-KW"/>
</dbReference>
<dbReference type="GO" id="GO:0008121">
    <property type="term" value="F:ubiquinol-cytochrome-c reductase activity"/>
    <property type="evidence" value="ECO:0007669"/>
    <property type="project" value="InterPro"/>
</dbReference>
<dbReference type="GO" id="GO:0006122">
    <property type="term" value="P:mitochondrial electron transport, ubiquinol to cytochrome c"/>
    <property type="evidence" value="ECO:0007669"/>
    <property type="project" value="TreeGrafter"/>
</dbReference>
<dbReference type="CDD" id="cd00290">
    <property type="entry name" value="cytochrome_b_C"/>
    <property type="match status" value="1"/>
</dbReference>
<dbReference type="CDD" id="cd00284">
    <property type="entry name" value="Cytochrome_b_N"/>
    <property type="match status" value="1"/>
</dbReference>
<dbReference type="Gene3D" id="1.20.810.10">
    <property type="entry name" value="Cytochrome Bc1 Complex, Chain C"/>
    <property type="match status" value="1"/>
</dbReference>
<dbReference type="InterPro" id="IPR005798">
    <property type="entry name" value="Cyt_b/b6_C"/>
</dbReference>
<dbReference type="InterPro" id="IPR036150">
    <property type="entry name" value="Cyt_b/b6_C_sf"/>
</dbReference>
<dbReference type="InterPro" id="IPR005797">
    <property type="entry name" value="Cyt_b/b6_N"/>
</dbReference>
<dbReference type="InterPro" id="IPR027387">
    <property type="entry name" value="Cytb/b6-like_sf"/>
</dbReference>
<dbReference type="InterPro" id="IPR030689">
    <property type="entry name" value="Cytochrome_b"/>
</dbReference>
<dbReference type="InterPro" id="IPR048260">
    <property type="entry name" value="Cytochrome_b_C_euk/bac"/>
</dbReference>
<dbReference type="InterPro" id="IPR048259">
    <property type="entry name" value="Cytochrome_b_N_euk/bac"/>
</dbReference>
<dbReference type="InterPro" id="IPR016174">
    <property type="entry name" value="Di-haem_cyt_TM"/>
</dbReference>
<dbReference type="PANTHER" id="PTHR19271">
    <property type="entry name" value="CYTOCHROME B"/>
    <property type="match status" value="1"/>
</dbReference>
<dbReference type="PANTHER" id="PTHR19271:SF16">
    <property type="entry name" value="CYTOCHROME B"/>
    <property type="match status" value="1"/>
</dbReference>
<dbReference type="Pfam" id="PF00032">
    <property type="entry name" value="Cytochrom_B_C"/>
    <property type="match status" value="1"/>
</dbReference>
<dbReference type="Pfam" id="PF00033">
    <property type="entry name" value="Cytochrome_B"/>
    <property type="match status" value="1"/>
</dbReference>
<dbReference type="PIRSF" id="PIRSF038885">
    <property type="entry name" value="COB"/>
    <property type="match status" value="1"/>
</dbReference>
<dbReference type="SUPFAM" id="SSF81648">
    <property type="entry name" value="a domain/subunit of cytochrome bc1 complex (Ubiquinol-cytochrome c reductase)"/>
    <property type="match status" value="1"/>
</dbReference>
<dbReference type="SUPFAM" id="SSF81342">
    <property type="entry name" value="Transmembrane di-heme cytochromes"/>
    <property type="match status" value="1"/>
</dbReference>
<dbReference type="PROSITE" id="PS51003">
    <property type="entry name" value="CYTB_CTER"/>
    <property type="match status" value="1"/>
</dbReference>
<dbReference type="PROSITE" id="PS51002">
    <property type="entry name" value="CYTB_NTER"/>
    <property type="match status" value="1"/>
</dbReference>
<protein>
    <recommendedName>
        <fullName>Cytochrome b</fullName>
    </recommendedName>
    <alternativeName>
        <fullName>Complex III subunit 3</fullName>
    </alternativeName>
    <alternativeName>
        <fullName>Complex III subunit III</fullName>
    </alternativeName>
    <alternativeName>
        <fullName>Cytochrome b-c1 complex subunit 3</fullName>
    </alternativeName>
    <alternativeName>
        <fullName>Ubiquinol-cytochrome-c reductase complex cytochrome b subunit</fullName>
    </alternativeName>
</protein>